<sequence length="882" mass="98244">MNAETPEGSAAPPSPASTSAKTVTDKTNKKRASPSGDSEQPTKVTKRRAARACVSCRARKVRCDVVEGAPCGNCRWDNVECVVQESRRRKKNLLTASTAGQPVSTEAQLRCKTAASNPMGMSTADLRRPSSGSAISTSSIDGPSSFLSNSGLDNHVPHMIYQRSGYRHDPVLLNKLHSNDGNPQRPVWSNNLMTTPSVFDSLRTFRFISSLEEQDSTAQLPAFLRPLPTKIAAEDVKYLQIKGALSVPTLPLQNALLQAYVEYVHPYMPLMDLNSFLGIINTRDGQNGQTSLFLYQAVMFAASAFVDMKYLREGGYTTRKAARKSFFQKTRLLYDFDYESDRLVLVQALLLMTYWYETPDDQKDTWHWMGVAISLAHTIGLHRNPGSTSMAPAKQKLWKRIWWSCFMRDRLIALGMRRPTRIKDEDFDVPMLEESDFEIEVLADDNTVIPASCTLVRNLDMQRELAIMCISKAQLCVCISHMLKAQYSVLIRDKMKPENTTNSTMMLFPNKQLDNVEGVTEVDHELMAWAESLPTCCQYRTLTPLDVKDGRSTIAVQRTLLHMVYYTTISALHRPQFLPSSPLQAPTTSRQVQDMSRLRVRDAAMHITRMATELHQCRLERFLPTTGVTVILPAMIIHLLEMKNPAPQARERATRGFRQCMRVMEKLREVYAAADYATGFLDAALRKAAIDINASVGPSTLAMMKRVPVEFSAQTPPPENAPYMTAAESLFNERPKEHRPQPTPTMMPPNTVNAAALELSTNSPPQTELEESPAGLTPSVSAASEEIQLDVGNMDLDFMQGHDEFDWNAVAGTDFDVDQWLQFPPEGVTNQDDNLIAGVLGRGVEEPTMSAEQALNWAINAEADATARQPDGRVQGEVPAQA</sequence>
<keyword id="KW-0238">DNA-binding</keyword>
<keyword id="KW-0479">Metal-binding</keyword>
<keyword id="KW-0539">Nucleus</keyword>
<keyword id="KW-0804">Transcription</keyword>
<keyword id="KW-0805">Transcription regulation</keyword>
<keyword id="KW-0862">Zinc</keyword>
<reference key="1">
    <citation type="submission" date="1996-03" db="EMBL/GenBank/DDBJ databases">
        <authorList>
            <person name="Li D."/>
            <person name="Kolattukudy P.E."/>
        </authorList>
    </citation>
    <scope>NUCLEOTIDE SEQUENCE [MRNA]</scope>
</reference>
<dbReference type="EMBL" id="U51672">
    <property type="protein sequence ID" value="AAA96825.1"/>
    <property type="molecule type" value="mRNA"/>
</dbReference>
<dbReference type="VEuPathDB" id="FungiDB:NECHADRAFT_105293"/>
<dbReference type="GO" id="GO:0005634">
    <property type="term" value="C:nucleus"/>
    <property type="evidence" value="ECO:0007669"/>
    <property type="project" value="UniProtKB-SubCell"/>
</dbReference>
<dbReference type="GO" id="GO:0003677">
    <property type="term" value="F:DNA binding"/>
    <property type="evidence" value="ECO:0007669"/>
    <property type="project" value="UniProtKB-KW"/>
</dbReference>
<dbReference type="GO" id="GO:0000981">
    <property type="term" value="F:DNA-binding transcription factor activity, RNA polymerase II-specific"/>
    <property type="evidence" value="ECO:0007669"/>
    <property type="project" value="InterPro"/>
</dbReference>
<dbReference type="GO" id="GO:0008270">
    <property type="term" value="F:zinc ion binding"/>
    <property type="evidence" value="ECO:0007669"/>
    <property type="project" value="InterPro"/>
</dbReference>
<dbReference type="GO" id="GO:0006351">
    <property type="term" value="P:DNA-templated transcription"/>
    <property type="evidence" value="ECO:0007669"/>
    <property type="project" value="InterPro"/>
</dbReference>
<dbReference type="CDD" id="cd12148">
    <property type="entry name" value="fungal_TF_MHR"/>
    <property type="match status" value="1"/>
</dbReference>
<dbReference type="CDD" id="cd00067">
    <property type="entry name" value="GAL4"/>
    <property type="match status" value="1"/>
</dbReference>
<dbReference type="Gene3D" id="4.10.240.10">
    <property type="entry name" value="Zn(2)-C6 fungal-type DNA-binding domain"/>
    <property type="match status" value="1"/>
</dbReference>
<dbReference type="InterPro" id="IPR052761">
    <property type="entry name" value="Fungal_Detox/Toxin_TFs"/>
</dbReference>
<dbReference type="InterPro" id="IPR007219">
    <property type="entry name" value="Transcription_factor_dom_fun"/>
</dbReference>
<dbReference type="InterPro" id="IPR036864">
    <property type="entry name" value="Zn2-C6_fun-type_DNA-bd_sf"/>
</dbReference>
<dbReference type="InterPro" id="IPR001138">
    <property type="entry name" value="Zn2Cys6_DnaBD"/>
</dbReference>
<dbReference type="PANTHER" id="PTHR47425">
    <property type="entry name" value="FARB-RELATED"/>
    <property type="match status" value="1"/>
</dbReference>
<dbReference type="PANTHER" id="PTHR47425:SF2">
    <property type="entry name" value="FARB-RELATED"/>
    <property type="match status" value="1"/>
</dbReference>
<dbReference type="Pfam" id="PF04082">
    <property type="entry name" value="Fungal_trans"/>
    <property type="match status" value="1"/>
</dbReference>
<dbReference type="Pfam" id="PF00172">
    <property type="entry name" value="Zn_clus"/>
    <property type="match status" value="1"/>
</dbReference>
<dbReference type="SMART" id="SM00906">
    <property type="entry name" value="Fungal_trans"/>
    <property type="match status" value="1"/>
</dbReference>
<dbReference type="SMART" id="SM00066">
    <property type="entry name" value="GAL4"/>
    <property type="match status" value="1"/>
</dbReference>
<dbReference type="SUPFAM" id="SSF57701">
    <property type="entry name" value="Zn2/Cys6 DNA-binding domain"/>
    <property type="match status" value="1"/>
</dbReference>
<dbReference type="PROSITE" id="PS00463">
    <property type="entry name" value="ZN2_CY6_FUNGAL_1"/>
    <property type="match status" value="1"/>
</dbReference>
<dbReference type="PROSITE" id="PS50048">
    <property type="entry name" value="ZN2_CY6_FUNGAL_2"/>
    <property type="match status" value="1"/>
</dbReference>
<protein>
    <recommendedName>
        <fullName>Cutinase transcription factor 1 beta</fullName>
    </recommendedName>
</protein>
<comment type="subcellular location">
    <subcellularLocation>
        <location evidence="1">Nucleus</location>
    </subcellularLocation>
</comment>
<accession>P52959</accession>
<evidence type="ECO:0000255" key="1">
    <source>
        <dbReference type="PROSITE-ProRule" id="PRU00227"/>
    </source>
</evidence>
<evidence type="ECO:0000256" key="2">
    <source>
        <dbReference type="SAM" id="MobiDB-lite"/>
    </source>
</evidence>
<proteinExistence type="evidence at transcript level"/>
<name>CTF1B_FUSVN</name>
<organism>
    <name type="scientific">Fusarium vanettenii</name>
    <name type="common">Neocosmospora pisi</name>
    <dbReference type="NCBI Taxonomy" id="2747968"/>
    <lineage>
        <taxon>Eukaryota</taxon>
        <taxon>Fungi</taxon>
        <taxon>Dikarya</taxon>
        <taxon>Ascomycota</taxon>
        <taxon>Pezizomycotina</taxon>
        <taxon>Sordariomycetes</taxon>
        <taxon>Hypocreomycetidae</taxon>
        <taxon>Hypocreales</taxon>
        <taxon>Nectriaceae</taxon>
        <taxon>Fusarium</taxon>
        <taxon>Fusarium solani species complex</taxon>
    </lineage>
</organism>
<feature type="chain" id="PRO_0000114944" description="Cutinase transcription factor 1 beta">
    <location>
        <begin position="1"/>
        <end position="882"/>
    </location>
</feature>
<feature type="DNA-binding region" description="Zn(2)-C6 fungal-type" evidence="1">
    <location>
        <begin position="53"/>
        <end position="81"/>
    </location>
</feature>
<feature type="region of interest" description="Disordered" evidence="2">
    <location>
        <begin position="1"/>
        <end position="49"/>
    </location>
</feature>
<feature type="region of interest" description="Disordered" evidence="2">
    <location>
        <begin position="117"/>
        <end position="148"/>
    </location>
</feature>
<feature type="compositionally biased region" description="Low complexity" evidence="2">
    <location>
        <begin position="1"/>
        <end position="20"/>
    </location>
</feature>
<feature type="compositionally biased region" description="Low complexity" evidence="2">
    <location>
        <begin position="130"/>
        <end position="139"/>
    </location>
</feature>
<gene>
    <name type="primary">CTF1-BETA</name>
</gene>